<keyword id="KW-0963">Cytoplasm</keyword>
<keyword id="KW-0378">Hydrolase</keyword>
<keyword id="KW-0460">Magnesium</keyword>
<keyword id="KW-0464">Manganese</keyword>
<keyword id="KW-0479">Metal-binding</keyword>
<keyword id="KW-0546">Nucleotide metabolism</keyword>
<keyword id="KW-0547">Nucleotide-binding</keyword>
<keyword id="KW-1185">Reference proteome</keyword>
<evidence type="ECO:0000255" key="1">
    <source>
        <dbReference type="HAMAP-Rule" id="MF_03148"/>
    </source>
</evidence>
<dbReference type="EC" id="3.6.1.66" evidence="1"/>
<dbReference type="EMBL" id="CM000760">
    <property type="protein sequence ID" value="EER91526.1"/>
    <property type="molecule type" value="Genomic_DNA"/>
</dbReference>
<dbReference type="SMR" id="C5WZH0"/>
<dbReference type="FunCoup" id="C5WZH0">
    <property type="interactions" value="2002"/>
</dbReference>
<dbReference type="STRING" id="4558.C5WZH0"/>
<dbReference type="EnsemblPlants" id="EER91526">
    <property type="protein sequence ID" value="EER91526"/>
    <property type="gene ID" value="SORBI_3001G230200"/>
</dbReference>
<dbReference type="Gramene" id="EER91526">
    <property type="protein sequence ID" value="EER91526"/>
    <property type="gene ID" value="SORBI_3001G230200"/>
</dbReference>
<dbReference type="KEGG" id="sbi:8059277"/>
<dbReference type="eggNOG" id="KOG3222">
    <property type="taxonomic scope" value="Eukaryota"/>
</dbReference>
<dbReference type="HOGENOM" id="CLU_082080_1_1_1"/>
<dbReference type="InParanoid" id="C5WZH0"/>
<dbReference type="OMA" id="YDPIFQP"/>
<dbReference type="OrthoDB" id="6288734at2759"/>
<dbReference type="Proteomes" id="UP000000768">
    <property type="component" value="Chromosome 1"/>
</dbReference>
<dbReference type="GO" id="GO:0005737">
    <property type="term" value="C:cytoplasm"/>
    <property type="evidence" value="ECO:0000318"/>
    <property type="project" value="GO_Central"/>
</dbReference>
<dbReference type="GO" id="GO:0035870">
    <property type="term" value="F:dITP diphosphatase activity"/>
    <property type="evidence" value="ECO:0007669"/>
    <property type="project" value="RHEA"/>
</dbReference>
<dbReference type="GO" id="GO:0036220">
    <property type="term" value="F:ITP diphosphatase activity"/>
    <property type="evidence" value="ECO:0007669"/>
    <property type="project" value="RHEA"/>
</dbReference>
<dbReference type="GO" id="GO:0046872">
    <property type="term" value="F:metal ion binding"/>
    <property type="evidence" value="ECO:0007669"/>
    <property type="project" value="UniProtKB-KW"/>
</dbReference>
<dbReference type="GO" id="GO:0047429">
    <property type="term" value="F:nucleoside triphosphate diphosphatase activity"/>
    <property type="evidence" value="ECO:0000318"/>
    <property type="project" value="GO_Central"/>
</dbReference>
<dbReference type="GO" id="GO:0000166">
    <property type="term" value="F:nucleotide binding"/>
    <property type="evidence" value="ECO:0007669"/>
    <property type="project" value="UniProtKB-KW"/>
</dbReference>
<dbReference type="GO" id="GO:0036222">
    <property type="term" value="F:XTP diphosphatase activity"/>
    <property type="evidence" value="ECO:0007669"/>
    <property type="project" value="RHEA"/>
</dbReference>
<dbReference type="GO" id="GO:0009204">
    <property type="term" value="P:deoxyribonucleoside triphosphate catabolic process"/>
    <property type="evidence" value="ECO:0007669"/>
    <property type="project" value="UniProtKB-UniRule"/>
</dbReference>
<dbReference type="GO" id="GO:0009143">
    <property type="term" value="P:nucleoside triphosphate catabolic process"/>
    <property type="evidence" value="ECO:0000318"/>
    <property type="project" value="GO_Central"/>
</dbReference>
<dbReference type="GO" id="GO:0009117">
    <property type="term" value="P:nucleotide metabolic process"/>
    <property type="evidence" value="ECO:0007669"/>
    <property type="project" value="UniProtKB-KW"/>
</dbReference>
<dbReference type="CDD" id="cd00515">
    <property type="entry name" value="HAM1"/>
    <property type="match status" value="1"/>
</dbReference>
<dbReference type="FunFam" id="3.90.950.10:FF:000003">
    <property type="entry name" value="Inosine triphosphate pyrophosphatase"/>
    <property type="match status" value="1"/>
</dbReference>
<dbReference type="Gene3D" id="3.90.950.10">
    <property type="match status" value="1"/>
</dbReference>
<dbReference type="HAMAP" id="MF_03148">
    <property type="entry name" value="HAM1_NTPase"/>
    <property type="match status" value="1"/>
</dbReference>
<dbReference type="InterPro" id="IPR027502">
    <property type="entry name" value="ITPase"/>
</dbReference>
<dbReference type="InterPro" id="IPR029001">
    <property type="entry name" value="ITPase-like_fam"/>
</dbReference>
<dbReference type="InterPro" id="IPR002637">
    <property type="entry name" value="RdgB/HAM1"/>
</dbReference>
<dbReference type="PANTHER" id="PTHR11067:SF9">
    <property type="entry name" value="INOSINE TRIPHOSPHATE PYROPHOSPHATASE"/>
    <property type="match status" value="1"/>
</dbReference>
<dbReference type="PANTHER" id="PTHR11067">
    <property type="entry name" value="INOSINE TRIPHOSPHATE PYROPHOSPHATASE/HAM1 PROTEIN"/>
    <property type="match status" value="1"/>
</dbReference>
<dbReference type="Pfam" id="PF01725">
    <property type="entry name" value="Ham1p_like"/>
    <property type="match status" value="1"/>
</dbReference>
<dbReference type="SUPFAM" id="SSF52972">
    <property type="entry name" value="ITPase-like"/>
    <property type="match status" value="1"/>
</dbReference>
<protein>
    <recommendedName>
        <fullName evidence="1">Inosine triphosphate pyrophosphatase</fullName>
        <shortName evidence="1">ITPase</shortName>
        <shortName evidence="1">Inosine triphosphatase</shortName>
        <ecNumber evidence="1">3.6.1.66</ecNumber>
    </recommendedName>
    <alternativeName>
        <fullName evidence="1">Non-canonical purine NTP pyrophosphatase</fullName>
    </alternativeName>
    <alternativeName>
        <fullName evidence="1">Non-standard purine NTP pyrophosphatase</fullName>
    </alternativeName>
    <alternativeName>
        <fullName evidence="1">Nucleoside-triphosphate diphosphatase</fullName>
    </alternativeName>
    <alternativeName>
        <fullName evidence="1">Nucleoside-triphosphate pyrophosphatase</fullName>
        <shortName evidence="1">NTPase</shortName>
    </alternativeName>
    <alternativeName>
        <fullName evidence="1">XTP/dITP diphosphatase</fullName>
    </alternativeName>
</protein>
<feature type="chain" id="PRO_0000413118" description="Inosine triphosphate pyrophosphatase">
    <location>
        <begin position="1"/>
        <end position="201"/>
    </location>
</feature>
<feature type="binding site" evidence="1">
    <location>
        <begin position="16"/>
        <end position="21"/>
    </location>
    <ligand>
        <name>ITP</name>
        <dbReference type="ChEBI" id="CHEBI:61402"/>
    </ligand>
</feature>
<feature type="binding site" evidence="1">
    <location>
        <position position="44"/>
    </location>
    <ligand>
        <name>Mg(2+)</name>
        <dbReference type="ChEBI" id="CHEBI:18420"/>
    </ligand>
</feature>
<feature type="binding site" evidence="1">
    <location>
        <position position="56"/>
    </location>
    <ligand>
        <name>ITP</name>
        <dbReference type="ChEBI" id="CHEBI:61402"/>
    </ligand>
</feature>
<feature type="binding site" evidence="1">
    <location>
        <begin position="72"/>
        <end position="73"/>
    </location>
    <ligand>
        <name>ITP</name>
        <dbReference type="ChEBI" id="CHEBI:61402"/>
    </ligand>
</feature>
<feature type="binding site" evidence="1">
    <location>
        <position position="89"/>
    </location>
    <ligand>
        <name>ITP</name>
        <dbReference type="ChEBI" id="CHEBI:61402"/>
    </ligand>
</feature>
<feature type="binding site" evidence="1">
    <location>
        <begin position="148"/>
        <end position="151"/>
    </location>
    <ligand>
        <name>ITP</name>
        <dbReference type="ChEBI" id="CHEBI:61402"/>
    </ligand>
</feature>
<feature type="binding site" evidence="1">
    <location>
        <position position="171"/>
    </location>
    <ligand>
        <name>ITP</name>
        <dbReference type="ChEBI" id="CHEBI:61402"/>
    </ligand>
</feature>
<feature type="binding site" evidence="1">
    <location>
        <begin position="176"/>
        <end position="177"/>
    </location>
    <ligand>
        <name>ITP</name>
        <dbReference type="ChEBI" id="CHEBI:61402"/>
    </ligand>
</feature>
<reference key="1">
    <citation type="journal article" date="2009" name="Nature">
        <title>The Sorghum bicolor genome and the diversification of grasses.</title>
        <authorList>
            <person name="Paterson A.H."/>
            <person name="Bowers J.E."/>
            <person name="Bruggmann R."/>
            <person name="Dubchak I."/>
            <person name="Grimwood J."/>
            <person name="Gundlach H."/>
            <person name="Haberer G."/>
            <person name="Hellsten U."/>
            <person name="Mitros T."/>
            <person name="Poliakov A."/>
            <person name="Schmutz J."/>
            <person name="Spannagl M."/>
            <person name="Tang H."/>
            <person name="Wang X."/>
            <person name="Wicker T."/>
            <person name="Bharti A.K."/>
            <person name="Chapman J."/>
            <person name="Feltus F.A."/>
            <person name="Gowik U."/>
            <person name="Grigoriev I.V."/>
            <person name="Lyons E."/>
            <person name="Maher C.A."/>
            <person name="Martis M."/>
            <person name="Narechania A."/>
            <person name="Otillar R.P."/>
            <person name="Penning B.W."/>
            <person name="Salamov A.A."/>
            <person name="Wang Y."/>
            <person name="Zhang L."/>
            <person name="Carpita N.C."/>
            <person name="Freeling M."/>
            <person name="Gingle A.R."/>
            <person name="Hash C.T."/>
            <person name="Keller B."/>
            <person name="Klein P."/>
            <person name="Kresovich S."/>
            <person name="McCann M.C."/>
            <person name="Ming R."/>
            <person name="Peterson D.G."/>
            <person name="Mehboob-ur-Rahman M."/>
            <person name="Ware D."/>
            <person name="Westhoff P."/>
            <person name="Mayer K.F.X."/>
            <person name="Messing J."/>
            <person name="Rokhsar D.S."/>
        </authorList>
    </citation>
    <scope>NUCLEOTIDE SEQUENCE [LARGE SCALE GENOMIC DNA]</scope>
    <source>
        <strain>cv. BTx623</strain>
    </source>
</reference>
<reference key="2">
    <citation type="journal article" date="2018" name="Plant J.">
        <title>The Sorghum bicolor reference genome: improved assembly, gene annotations, a transcriptome atlas, and signatures of genome organization.</title>
        <authorList>
            <person name="McCormick R.F."/>
            <person name="Truong S.K."/>
            <person name="Sreedasyam A."/>
            <person name="Jenkins J."/>
            <person name="Shu S."/>
            <person name="Sims D."/>
            <person name="Kennedy M."/>
            <person name="Amirebrahimi M."/>
            <person name="Weers B.D."/>
            <person name="McKinley B."/>
            <person name="Mattison A."/>
            <person name="Morishige D.T."/>
            <person name="Grimwood J."/>
            <person name="Schmutz J."/>
            <person name="Mullet J.E."/>
        </authorList>
    </citation>
    <scope>GENOME REANNOTATION</scope>
    <source>
        <strain>cv. BTx623</strain>
    </source>
</reference>
<name>ITPA_SORBI</name>
<comment type="function">
    <text evidence="1">Pyrophosphatase that hydrolyzes non-canonical purine nucleotides such as inosine triphosphate (ITP), deoxyinosine triphosphate (dITP) or xanthosine 5'-triphosphate (XTP) to their respective monophosphate derivatives. The enzyme does not distinguish between the deoxy- and ribose forms. Probably excludes non-canonical purines from RNA and DNA precursor pools, thus preventing their incorporation into RNA and DNA and avoiding chromosomal lesions.</text>
</comment>
<comment type="catalytic activity">
    <reaction evidence="1">
        <text>ITP + H2O = IMP + diphosphate + H(+)</text>
        <dbReference type="Rhea" id="RHEA:29399"/>
        <dbReference type="ChEBI" id="CHEBI:15377"/>
        <dbReference type="ChEBI" id="CHEBI:15378"/>
        <dbReference type="ChEBI" id="CHEBI:33019"/>
        <dbReference type="ChEBI" id="CHEBI:58053"/>
        <dbReference type="ChEBI" id="CHEBI:61402"/>
        <dbReference type="EC" id="3.6.1.66"/>
    </reaction>
    <physiologicalReaction direction="left-to-right" evidence="1">
        <dbReference type="Rhea" id="RHEA:29400"/>
    </physiologicalReaction>
</comment>
<comment type="catalytic activity">
    <reaction evidence="1">
        <text>dITP + H2O = dIMP + diphosphate + H(+)</text>
        <dbReference type="Rhea" id="RHEA:28342"/>
        <dbReference type="ChEBI" id="CHEBI:15377"/>
        <dbReference type="ChEBI" id="CHEBI:15378"/>
        <dbReference type="ChEBI" id="CHEBI:33019"/>
        <dbReference type="ChEBI" id="CHEBI:61194"/>
        <dbReference type="ChEBI" id="CHEBI:61382"/>
        <dbReference type="EC" id="3.6.1.66"/>
    </reaction>
    <physiologicalReaction direction="left-to-right" evidence="1">
        <dbReference type="Rhea" id="RHEA:28343"/>
    </physiologicalReaction>
</comment>
<comment type="catalytic activity">
    <reaction evidence="1">
        <text>XTP + H2O = XMP + diphosphate + H(+)</text>
        <dbReference type="Rhea" id="RHEA:28610"/>
        <dbReference type="ChEBI" id="CHEBI:15377"/>
        <dbReference type="ChEBI" id="CHEBI:15378"/>
        <dbReference type="ChEBI" id="CHEBI:33019"/>
        <dbReference type="ChEBI" id="CHEBI:57464"/>
        <dbReference type="ChEBI" id="CHEBI:61314"/>
        <dbReference type="EC" id="3.6.1.66"/>
    </reaction>
    <physiologicalReaction direction="left-to-right" evidence="1">
        <dbReference type="Rhea" id="RHEA:28611"/>
    </physiologicalReaction>
</comment>
<comment type="cofactor">
    <cofactor evidence="1">
        <name>Mg(2+)</name>
        <dbReference type="ChEBI" id="CHEBI:18420"/>
    </cofactor>
    <cofactor evidence="1">
        <name>Mn(2+)</name>
        <dbReference type="ChEBI" id="CHEBI:29035"/>
    </cofactor>
    <text evidence="1">Binds 1 divalent metal cation per subunit; can use either Mg(2+) or Mn(2+).</text>
</comment>
<comment type="subunit">
    <text evidence="1">Homodimer.</text>
</comment>
<comment type="subcellular location">
    <subcellularLocation>
        <location evidence="1">Cytoplasm</location>
    </subcellularLocation>
</comment>
<comment type="similarity">
    <text evidence="1">Belongs to the HAM1 NTPase family.</text>
</comment>
<proteinExistence type="evidence at transcript level"/>
<sequence>MSAAARVLPKAVTFVTGNAKKLEEVRAILGSSIPFQSLKLDLPELQGEPEDISKEKARMAASQVNGPVLVEDTCLCFNALKGLPGPYIKWFLEKIGHEGLNNLLKAYEDKSAFAMCIFSLALGPGEEPITFVGKTAGKIVPARGPNDFGWDPVFQPDGFEQTYAEMPKSVKNEISHRGKALALVKEHFASASYTVQSDNSA</sequence>
<gene>
    <name type="ordered locus">Sb01g020160</name>
</gene>
<organism>
    <name type="scientific">Sorghum bicolor</name>
    <name type="common">Sorghum</name>
    <name type="synonym">Sorghum vulgare</name>
    <dbReference type="NCBI Taxonomy" id="4558"/>
    <lineage>
        <taxon>Eukaryota</taxon>
        <taxon>Viridiplantae</taxon>
        <taxon>Streptophyta</taxon>
        <taxon>Embryophyta</taxon>
        <taxon>Tracheophyta</taxon>
        <taxon>Spermatophyta</taxon>
        <taxon>Magnoliopsida</taxon>
        <taxon>Liliopsida</taxon>
        <taxon>Poales</taxon>
        <taxon>Poaceae</taxon>
        <taxon>PACMAD clade</taxon>
        <taxon>Panicoideae</taxon>
        <taxon>Andropogonodae</taxon>
        <taxon>Andropogoneae</taxon>
        <taxon>Sorghinae</taxon>
        <taxon>Sorghum</taxon>
    </lineage>
</organism>
<accession>C5WZH0</accession>